<name>LEUD_ECO7I</name>
<evidence type="ECO:0000255" key="1">
    <source>
        <dbReference type="HAMAP-Rule" id="MF_01031"/>
    </source>
</evidence>
<feature type="chain" id="PRO_1000135802" description="3-isopropylmalate dehydratase small subunit">
    <location>
        <begin position="1"/>
        <end position="201"/>
    </location>
</feature>
<sequence>MAEKFIKHTGLVVPLDAANVDTDAIIPKQFLQKVTRTGFGAHLFNDWRFLDEKGQQPNPDFVLNFPQYQGASILLARENFGCGSSREHAPWALTDYGFKVVIAPSFADIFYGNSFNNQLLPVKLSDAEVDELFALVKANPGIHFDVDLEAQEVKAGEKTYRFTIDAFRRHCMMNGLDSIGLTLQHDDAIASYEEKQPAFMR</sequence>
<accession>B7NHH9</accession>
<gene>
    <name evidence="1" type="primary">leuD</name>
    <name type="ordered locus">ECIAI39_0076</name>
</gene>
<comment type="function">
    <text evidence="1">Catalyzes the isomerization between 2-isopropylmalate and 3-isopropylmalate, via the formation of 2-isopropylmaleate.</text>
</comment>
<comment type="catalytic activity">
    <reaction evidence="1">
        <text>(2R,3S)-3-isopropylmalate = (2S)-2-isopropylmalate</text>
        <dbReference type="Rhea" id="RHEA:32287"/>
        <dbReference type="ChEBI" id="CHEBI:1178"/>
        <dbReference type="ChEBI" id="CHEBI:35121"/>
        <dbReference type="EC" id="4.2.1.33"/>
    </reaction>
</comment>
<comment type="pathway">
    <text evidence="1">Amino-acid biosynthesis; L-leucine biosynthesis; L-leucine from 3-methyl-2-oxobutanoate: step 2/4.</text>
</comment>
<comment type="subunit">
    <text evidence="1">Heterodimer of LeuC and LeuD.</text>
</comment>
<comment type="similarity">
    <text evidence="1">Belongs to the LeuD family. LeuD type 1 subfamily.</text>
</comment>
<protein>
    <recommendedName>
        <fullName evidence="1">3-isopropylmalate dehydratase small subunit</fullName>
        <ecNumber evidence="1">4.2.1.33</ecNumber>
    </recommendedName>
    <alternativeName>
        <fullName evidence="1">Alpha-IPM isomerase</fullName>
        <shortName evidence="1">IPMI</shortName>
    </alternativeName>
    <alternativeName>
        <fullName evidence="1">Isopropylmalate isomerase</fullName>
    </alternativeName>
</protein>
<keyword id="KW-0028">Amino-acid biosynthesis</keyword>
<keyword id="KW-0100">Branched-chain amino acid biosynthesis</keyword>
<keyword id="KW-0432">Leucine biosynthesis</keyword>
<keyword id="KW-0456">Lyase</keyword>
<proteinExistence type="inferred from homology"/>
<reference key="1">
    <citation type="journal article" date="2009" name="PLoS Genet.">
        <title>Organised genome dynamics in the Escherichia coli species results in highly diverse adaptive paths.</title>
        <authorList>
            <person name="Touchon M."/>
            <person name="Hoede C."/>
            <person name="Tenaillon O."/>
            <person name="Barbe V."/>
            <person name="Baeriswyl S."/>
            <person name="Bidet P."/>
            <person name="Bingen E."/>
            <person name="Bonacorsi S."/>
            <person name="Bouchier C."/>
            <person name="Bouvet O."/>
            <person name="Calteau A."/>
            <person name="Chiapello H."/>
            <person name="Clermont O."/>
            <person name="Cruveiller S."/>
            <person name="Danchin A."/>
            <person name="Diard M."/>
            <person name="Dossat C."/>
            <person name="Karoui M.E."/>
            <person name="Frapy E."/>
            <person name="Garry L."/>
            <person name="Ghigo J.M."/>
            <person name="Gilles A.M."/>
            <person name="Johnson J."/>
            <person name="Le Bouguenec C."/>
            <person name="Lescat M."/>
            <person name="Mangenot S."/>
            <person name="Martinez-Jehanne V."/>
            <person name="Matic I."/>
            <person name="Nassif X."/>
            <person name="Oztas S."/>
            <person name="Petit M.A."/>
            <person name="Pichon C."/>
            <person name="Rouy Z."/>
            <person name="Ruf C.S."/>
            <person name="Schneider D."/>
            <person name="Tourret J."/>
            <person name="Vacherie B."/>
            <person name="Vallenet D."/>
            <person name="Medigue C."/>
            <person name="Rocha E.P.C."/>
            <person name="Denamur E."/>
        </authorList>
    </citation>
    <scope>NUCLEOTIDE SEQUENCE [LARGE SCALE GENOMIC DNA]</scope>
    <source>
        <strain>IAI39 / ExPEC</strain>
    </source>
</reference>
<organism>
    <name type="scientific">Escherichia coli O7:K1 (strain IAI39 / ExPEC)</name>
    <dbReference type="NCBI Taxonomy" id="585057"/>
    <lineage>
        <taxon>Bacteria</taxon>
        <taxon>Pseudomonadati</taxon>
        <taxon>Pseudomonadota</taxon>
        <taxon>Gammaproteobacteria</taxon>
        <taxon>Enterobacterales</taxon>
        <taxon>Enterobacteriaceae</taxon>
        <taxon>Escherichia</taxon>
    </lineage>
</organism>
<dbReference type="EC" id="4.2.1.33" evidence="1"/>
<dbReference type="EMBL" id="CU928164">
    <property type="protein sequence ID" value="CAR16217.1"/>
    <property type="molecule type" value="Genomic_DNA"/>
</dbReference>
<dbReference type="RefSeq" id="WP_000818231.1">
    <property type="nucleotide sequence ID" value="NC_011750.1"/>
</dbReference>
<dbReference type="RefSeq" id="YP_002406124.1">
    <property type="nucleotide sequence ID" value="NC_011750.1"/>
</dbReference>
<dbReference type="SMR" id="B7NHH9"/>
<dbReference type="STRING" id="585057.ECIAI39_0076"/>
<dbReference type="KEGG" id="ect:ECIAI39_0076"/>
<dbReference type="PATRIC" id="fig|585057.6.peg.83"/>
<dbReference type="HOGENOM" id="CLU_081378_0_3_6"/>
<dbReference type="UniPathway" id="UPA00048">
    <property type="reaction ID" value="UER00071"/>
</dbReference>
<dbReference type="Proteomes" id="UP000000749">
    <property type="component" value="Chromosome"/>
</dbReference>
<dbReference type="GO" id="GO:0009316">
    <property type="term" value="C:3-isopropylmalate dehydratase complex"/>
    <property type="evidence" value="ECO:0007669"/>
    <property type="project" value="InterPro"/>
</dbReference>
<dbReference type="GO" id="GO:0003861">
    <property type="term" value="F:3-isopropylmalate dehydratase activity"/>
    <property type="evidence" value="ECO:0007669"/>
    <property type="project" value="UniProtKB-UniRule"/>
</dbReference>
<dbReference type="GO" id="GO:0009098">
    <property type="term" value="P:L-leucine biosynthetic process"/>
    <property type="evidence" value="ECO:0007669"/>
    <property type="project" value="UniProtKB-UniRule"/>
</dbReference>
<dbReference type="CDD" id="cd01577">
    <property type="entry name" value="IPMI_Swivel"/>
    <property type="match status" value="1"/>
</dbReference>
<dbReference type="FunFam" id="3.20.19.10:FF:000003">
    <property type="entry name" value="3-isopropylmalate dehydratase small subunit"/>
    <property type="match status" value="1"/>
</dbReference>
<dbReference type="Gene3D" id="3.20.19.10">
    <property type="entry name" value="Aconitase, domain 4"/>
    <property type="match status" value="1"/>
</dbReference>
<dbReference type="HAMAP" id="MF_01031">
    <property type="entry name" value="LeuD_type1"/>
    <property type="match status" value="1"/>
</dbReference>
<dbReference type="InterPro" id="IPR004431">
    <property type="entry name" value="3-IsopropMal_deHydase_ssu"/>
</dbReference>
<dbReference type="InterPro" id="IPR015928">
    <property type="entry name" value="Aconitase/3IPM_dehydase_swvl"/>
</dbReference>
<dbReference type="InterPro" id="IPR000573">
    <property type="entry name" value="AconitaseA/IPMdHydase_ssu_swvl"/>
</dbReference>
<dbReference type="InterPro" id="IPR033940">
    <property type="entry name" value="IPMI_Swivel"/>
</dbReference>
<dbReference type="InterPro" id="IPR050075">
    <property type="entry name" value="LeuD"/>
</dbReference>
<dbReference type="NCBIfam" id="TIGR00171">
    <property type="entry name" value="leuD"/>
    <property type="match status" value="1"/>
</dbReference>
<dbReference type="NCBIfam" id="NF002458">
    <property type="entry name" value="PRK01641.1"/>
    <property type="match status" value="1"/>
</dbReference>
<dbReference type="PANTHER" id="PTHR43345:SF5">
    <property type="entry name" value="3-ISOPROPYLMALATE DEHYDRATASE SMALL SUBUNIT"/>
    <property type="match status" value="1"/>
</dbReference>
<dbReference type="PANTHER" id="PTHR43345">
    <property type="entry name" value="3-ISOPROPYLMALATE DEHYDRATASE SMALL SUBUNIT 2-RELATED-RELATED"/>
    <property type="match status" value="1"/>
</dbReference>
<dbReference type="Pfam" id="PF00694">
    <property type="entry name" value="Aconitase_C"/>
    <property type="match status" value="1"/>
</dbReference>
<dbReference type="SUPFAM" id="SSF52016">
    <property type="entry name" value="LeuD/IlvD-like"/>
    <property type="match status" value="1"/>
</dbReference>